<sequence>MRNFDLSPLYRSAIGFDRLFNHLENNQSQSNGGYPPYNVELVDENHYRIAIAVAGFAESELEITAQDNLLVVKGAHADEQKERTYLYQGIAERNFERKFQLAENIHVRGANLVNGLLYIDLERVIPEAKKPRRIEIN</sequence>
<dbReference type="EMBL" id="AP009240">
    <property type="protein sequence ID" value="BAG79497.1"/>
    <property type="molecule type" value="Genomic_DNA"/>
</dbReference>
<dbReference type="RefSeq" id="WP_001243437.1">
    <property type="nucleotide sequence ID" value="NC_011415.1"/>
</dbReference>
<dbReference type="SMR" id="B6I3S0"/>
<dbReference type="GeneID" id="93778428"/>
<dbReference type="KEGG" id="ecy:ECSE_3973"/>
<dbReference type="HOGENOM" id="CLU_046737_4_2_6"/>
<dbReference type="Proteomes" id="UP000008199">
    <property type="component" value="Chromosome"/>
</dbReference>
<dbReference type="GO" id="GO:0005737">
    <property type="term" value="C:cytoplasm"/>
    <property type="evidence" value="ECO:0007669"/>
    <property type="project" value="UniProtKB-SubCell"/>
</dbReference>
<dbReference type="GO" id="GO:0050821">
    <property type="term" value="P:protein stabilization"/>
    <property type="evidence" value="ECO:0007669"/>
    <property type="project" value="UniProtKB-UniRule"/>
</dbReference>
<dbReference type="CDD" id="cd06470">
    <property type="entry name" value="ACD_IbpA-B_like"/>
    <property type="match status" value="1"/>
</dbReference>
<dbReference type="FunFam" id="2.60.40.790:FF:000002">
    <property type="entry name" value="Small heat shock protein IbpA"/>
    <property type="match status" value="1"/>
</dbReference>
<dbReference type="Gene3D" id="2.60.40.790">
    <property type="match status" value="1"/>
</dbReference>
<dbReference type="HAMAP" id="MF_02000">
    <property type="entry name" value="HSP20_IbpA"/>
    <property type="match status" value="1"/>
</dbReference>
<dbReference type="InterPro" id="IPR002068">
    <property type="entry name" value="A-crystallin/Hsp20_dom"/>
</dbReference>
<dbReference type="InterPro" id="IPR037913">
    <property type="entry name" value="ACD_IbpA/B"/>
</dbReference>
<dbReference type="InterPro" id="IPR008978">
    <property type="entry name" value="HSP20-like_chaperone"/>
</dbReference>
<dbReference type="InterPro" id="IPR023728">
    <property type="entry name" value="HSP20_IbpA"/>
</dbReference>
<dbReference type="NCBIfam" id="NF008013">
    <property type="entry name" value="PRK10743.1"/>
    <property type="match status" value="1"/>
</dbReference>
<dbReference type="PANTHER" id="PTHR47062">
    <property type="match status" value="1"/>
</dbReference>
<dbReference type="PANTHER" id="PTHR47062:SF1">
    <property type="entry name" value="SMALL HEAT SHOCK PROTEIN IBPA"/>
    <property type="match status" value="1"/>
</dbReference>
<dbReference type="Pfam" id="PF00011">
    <property type="entry name" value="HSP20"/>
    <property type="match status" value="1"/>
</dbReference>
<dbReference type="SUPFAM" id="SSF49764">
    <property type="entry name" value="HSP20-like chaperones"/>
    <property type="match status" value="1"/>
</dbReference>
<dbReference type="PROSITE" id="PS01031">
    <property type="entry name" value="SHSP"/>
    <property type="match status" value="1"/>
</dbReference>
<feature type="chain" id="PRO_1000189085" description="Small heat shock protein IbpA">
    <location>
        <begin position="1"/>
        <end position="137"/>
    </location>
</feature>
<feature type="domain" description="sHSP" evidence="2">
    <location>
        <begin position="28"/>
        <end position="137"/>
    </location>
</feature>
<proteinExistence type="inferred from homology"/>
<evidence type="ECO:0000255" key="1">
    <source>
        <dbReference type="HAMAP-Rule" id="MF_02000"/>
    </source>
</evidence>
<evidence type="ECO:0000255" key="2">
    <source>
        <dbReference type="PROSITE-ProRule" id="PRU00285"/>
    </source>
</evidence>
<keyword id="KW-0143">Chaperone</keyword>
<keyword id="KW-0963">Cytoplasm</keyword>
<keyword id="KW-0346">Stress response</keyword>
<name>IBPA_ECOSE</name>
<organism>
    <name type="scientific">Escherichia coli (strain SE11)</name>
    <dbReference type="NCBI Taxonomy" id="409438"/>
    <lineage>
        <taxon>Bacteria</taxon>
        <taxon>Pseudomonadati</taxon>
        <taxon>Pseudomonadota</taxon>
        <taxon>Gammaproteobacteria</taxon>
        <taxon>Enterobacterales</taxon>
        <taxon>Enterobacteriaceae</taxon>
        <taxon>Escherichia</taxon>
    </lineage>
</organism>
<comment type="function">
    <text evidence="1">Associates with aggregated proteins, together with IbpB, to stabilize and protect them from irreversible denaturation and extensive proteolysis during heat shock and oxidative stress. Aggregated proteins bound to the IbpAB complex are more efficiently refolded and reactivated by the ATP-dependent chaperone systems ClpB and DnaK/DnaJ/GrpE. Its activity is ATP-independent.</text>
</comment>
<comment type="subunit">
    <text evidence="1">Monomer. Forms homomultimers of about 100-150 subunits at optimal growth temperatures. Conformation changes to monomers at high temperatures or high ionic concentrations.</text>
</comment>
<comment type="subcellular location">
    <subcellularLocation>
        <location evidence="1">Cytoplasm</location>
    </subcellularLocation>
</comment>
<comment type="similarity">
    <text evidence="1 2">Belongs to the small heat shock protein (HSP20) family.</text>
</comment>
<gene>
    <name evidence="1" type="primary">ibpA</name>
    <name type="ordered locus">ECSE_3973</name>
</gene>
<accession>B6I3S0</accession>
<reference key="1">
    <citation type="journal article" date="2008" name="DNA Res.">
        <title>Complete genome sequence and comparative analysis of the wild-type commensal Escherichia coli strain SE11 isolated from a healthy adult.</title>
        <authorList>
            <person name="Oshima K."/>
            <person name="Toh H."/>
            <person name="Ogura Y."/>
            <person name="Sasamoto H."/>
            <person name="Morita H."/>
            <person name="Park S.-H."/>
            <person name="Ooka T."/>
            <person name="Iyoda S."/>
            <person name="Taylor T.D."/>
            <person name="Hayashi T."/>
            <person name="Itoh K."/>
            <person name="Hattori M."/>
        </authorList>
    </citation>
    <scope>NUCLEOTIDE SEQUENCE [LARGE SCALE GENOMIC DNA]</scope>
    <source>
        <strain>SE11</strain>
    </source>
</reference>
<protein>
    <recommendedName>
        <fullName evidence="1">Small heat shock protein IbpA</fullName>
    </recommendedName>
    <alternativeName>
        <fullName evidence="1">16 kDa heat shock protein A</fullName>
    </alternativeName>
</protein>